<feature type="chain" id="PRO_0000219925" description="UPF0335 protein BR1752/BS1330_I1746">
    <location>
        <begin position="1"/>
        <end position="86"/>
    </location>
</feature>
<accession>Q8FYV6</accession>
<accession>G0K792</accession>
<sequence length="86" mass="9963">MSDDITSEAQTIAVGQLRAFIERIERLEEEKKTIGDDIKEVYAELKSSGFDSKVVRTIIRLRKKEDHERQEEEAMLQLYMDALGMS</sequence>
<proteinExistence type="inferred from homology"/>
<dbReference type="EMBL" id="AE014291">
    <property type="protein sequence ID" value="AAN30651.1"/>
    <property type="molecule type" value="Genomic_DNA"/>
</dbReference>
<dbReference type="EMBL" id="CP002997">
    <property type="protein sequence ID" value="AEM19068.1"/>
    <property type="molecule type" value="Genomic_DNA"/>
</dbReference>
<dbReference type="RefSeq" id="WP_004690473.1">
    <property type="nucleotide sequence ID" value="NZ_KN046804.1"/>
</dbReference>
<dbReference type="SMR" id="Q8FYV6"/>
<dbReference type="KEGG" id="bms:BR1752"/>
<dbReference type="KEGG" id="bsi:BS1330_I1746"/>
<dbReference type="PATRIC" id="fig|204722.21.peg.1232"/>
<dbReference type="HOGENOM" id="CLU_158651_3_0_5"/>
<dbReference type="Proteomes" id="UP000007104">
    <property type="component" value="Chromosome I"/>
</dbReference>
<dbReference type="GO" id="GO:0003677">
    <property type="term" value="F:DNA binding"/>
    <property type="evidence" value="ECO:0007669"/>
    <property type="project" value="InterPro"/>
</dbReference>
<dbReference type="HAMAP" id="MF_00797">
    <property type="entry name" value="UPF0335"/>
    <property type="match status" value="1"/>
</dbReference>
<dbReference type="InterPro" id="IPR018753">
    <property type="entry name" value="GapR-like"/>
</dbReference>
<dbReference type="InterPro" id="IPR046367">
    <property type="entry name" value="GapR-like_DNA-bd"/>
</dbReference>
<dbReference type="NCBIfam" id="NF010247">
    <property type="entry name" value="PRK13694.1"/>
    <property type="match status" value="1"/>
</dbReference>
<dbReference type="Pfam" id="PF10073">
    <property type="entry name" value="GapR_DNA-bd"/>
    <property type="match status" value="1"/>
</dbReference>
<evidence type="ECO:0000255" key="1">
    <source>
        <dbReference type="HAMAP-Rule" id="MF_00797"/>
    </source>
</evidence>
<gene>
    <name type="ordered locus">BR1752</name>
    <name type="ordered locus">BS1330_I1746</name>
</gene>
<name>Y1752_BRUSU</name>
<reference key="1">
    <citation type="journal article" date="2002" name="Proc. Natl. Acad. Sci. U.S.A.">
        <title>The Brucella suis genome reveals fundamental similarities between animal and plant pathogens and symbionts.</title>
        <authorList>
            <person name="Paulsen I.T."/>
            <person name="Seshadri R."/>
            <person name="Nelson K.E."/>
            <person name="Eisen J.A."/>
            <person name="Heidelberg J.F."/>
            <person name="Read T.D."/>
            <person name="Dodson R.J."/>
            <person name="Umayam L.A."/>
            <person name="Brinkac L.M."/>
            <person name="Beanan M.J."/>
            <person name="Daugherty S.C."/>
            <person name="DeBoy R.T."/>
            <person name="Durkin A.S."/>
            <person name="Kolonay J.F."/>
            <person name="Madupu R."/>
            <person name="Nelson W.C."/>
            <person name="Ayodeji B."/>
            <person name="Kraul M."/>
            <person name="Shetty J."/>
            <person name="Malek J.A."/>
            <person name="Van Aken S.E."/>
            <person name="Riedmuller S."/>
            <person name="Tettelin H."/>
            <person name="Gill S.R."/>
            <person name="White O."/>
            <person name="Salzberg S.L."/>
            <person name="Hoover D.L."/>
            <person name="Lindler L.E."/>
            <person name="Halling S.M."/>
            <person name="Boyle S.M."/>
            <person name="Fraser C.M."/>
        </authorList>
    </citation>
    <scope>NUCLEOTIDE SEQUENCE [LARGE SCALE GENOMIC DNA]</scope>
    <source>
        <strain>1330</strain>
    </source>
</reference>
<reference key="2">
    <citation type="journal article" date="2011" name="J. Bacteriol.">
        <title>Revised genome sequence of Brucella suis 1330.</title>
        <authorList>
            <person name="Tae H."/>
            <person name="Shallom S."/>
            <person name="Settlage R."/>
            <person name="Preston D."/>
            <person name="Adams L.G."/>
            <person name="Garner H.R."/>
        </authorList>
    </citation>
    <scope>NUCLEOTIDE SEQUENCE [LARGE SCALE GENOMIC DNA]</scope>
    <source>
        <strain>1330</strain>
    </source>
</reference>
<protein>
    <recommendedName>
        <fullName evidence="1">UPF0335 protein BR1752/BS1330_I1746</fullName>
    </recommendedName>
</protein>
<comment type="similarity">
    <text evidence="1">Belongs to the UPF0335 family.</text>
</comment>
<organism>
    <name type="scientific">Brucella suis biovar 1 (strain 1330)</name>
    <dbReference type="NCBI Taxonomy" id="204722"/>
    <lineage>
        <taxon>Bacteria</taxon>
        <taxon>Pseudomonadati</taxon>
        <taxon>Pseudomonadota</taxon>
        <taxon>Alphaproteobacteria</taxon>
        <taxon>Hyphomicrobiales</taxon>
        <taxon>Brucellaceae</taxon>
        <taxon>Brucella/Ochrobactrum group</taxon>
        <taxon>Brucella</taxon>
    </lineage>
</organism>